<proteinExistence type="inferred from homology"/>
<reference key="1">
    <citation type="journal article" date="2005" name="Science">
        <title>Life at depth: Photobacterium profundum genome sequence and expression analysis.</title>
        <authorList>
            <person name="Vezzi A."/>
            <person name="Campanaro S."/>
            <person name="D'Angelo M."/>
            <person name="Simonato F."/>
            <person name="Vitulo N."/>
            <person name="Lauro F.M."/>
            <person name="Cestaro A."/>
            <person name="Malacrida G."/>
            <person name="Simionati B."/>
            <person name="Cannata N."/>
            <person name="Romualdi C."/>
            <person name="Bartlett D.H."/>
            <person name="Valle G."/>
        </authorList>
    </citation>
    <scope>NUCLEOTIDE SEQUENCE [LARGE SCALE GENOMIC DNA]</scope>
    <source>
        <strain>ATCC BAA-1253 / SS9</strain>
    </source>
</reference>
<evidence type="ECO:0000255" key="1">
    <source>
        <dbReference type="HAMAP-Rule" id="MF_00173"/>
    </source>
</evidence>
<organism>
    <name type="scientific">Photobacterium profundum (strain SS9)</name>
    <dbReference type="NCBI Taxonomy" id="298386"/>
    <lineage>
        <taxon>Bacteria</taxon>
        <taxon>Pseudomonadati</taxon>
        <taxon>Pseudomonadota</taxon>
        <taxon>Gammaproteobacteria</taxon>
        <taxon>Vibrionales</taxon>
        <taxon>Vibrionaceae</taxon>
        <taxon>Photobacterium</taxon>
    </lineage>
</organism>
<name>ARGR_PHOPR</name>
<feature type="chain" id="PRO_0000205109" description="Arginine repressor">
    <location>
        <begin position="1"/>
        <end position="156"/>
    </location>
</feature>
<comment type="function">
    <text evidence="1">Regulates arginine biosynthesis genes.</text>
</comment>
<comment type="pathway">
    <text>Amino-acid biosynthesis; L-arginine biosynthesis [regulation].</text>
</comment>
<comment type="subcellular location">
    <subcellularLocation>
        <location evidence="1">Cytoplasm</location>
    </subcellularLocation>
</comment>
<comment type="similarity">
    <text evidence="1">Belongs to the ArgR family.</text>
</comment>
<sequence length="156" mass="17023">MRNSDKQERLIKAFKSILKDEKFSSQGEIVDALKAQGFDNINQSKVSRMLTKFGAVRTRNAKMEMVYCLPIELGVPTTTSPLKELVMEVGHNSALVVIHTGPGAAQVIARLLDSLGKAEGILGVVAGDDTIFITPTNTTTTEELFNSVCDLFDYSI</sequence>
<dbReference type="EMBL" id="CR378664">
    <property type="protein sequence ID" value="CAG18822.1"/>
    <property type="molecule type" value="Genomic_DNA"/>
</dbReference>
<dbReference type="RefSeq" id="WP_011217181.1">
    <property type="nucleotide sequence ID" value="NC_006370.1"/>
</dbReference>
<dbReference type="SMR" id="Q6LV53"/>
<dbReference type="STRING" id="298386.PBPRA0390"/>
<dbReference type="KEGG" id="ppr:PBPRA0390"/>
<dbReference type="eggNOG" id="COG1438">
    <property type="taxonomic scope" value="Bacteria"/>
</dbReference>
<dbReference type="HOGENOM" id="CLU_097103_2_0_6"/>
<dbReference type="UniPathway" id="UPA00068"/>
<dbReference type="Proteomes" id="UP000000593">
    <property type="component" value="Chromosome 1"/>
</dbReference>
<dbReference type="GO" id="GO:0005737">
    <property type="term" value="C:cytoplasm"/>
    <property type="evidence" value="ECO:0007669"/>
    <property type="project" value="UniProtKB-SubCell"/>
</dbReference>
<dbReference type="GO" id="GO:0034618">
    <property type="term" value="F:arginine binding"/>
    <property type="evidence" value="ECO:0007669"/>
    <property type="project" value="InterPro"/>
</dbReference>
<dbReference type="GO" id="GO:0003677">
    <property type="term" value="F:DNA binding"/>
    <property type="evidence" value="ECO:0007669"/>
    <property type="project" value="UniProtKB-KW"/>
</dbReference>
<dbReference type="GO" id="GO:0003700">
    <property type="term" value="F:DNA-binding transcription factor activity"/>
    <property type="evidence" value="ECO:0007669"/>
    <property type="project" value="UniProtKB-UniRule"/>
</dbReference>
<dbReference type="GO" id="GO:0006526">
    <property type="term" value="P:L-arginine biosynthetic process"/>
    <property type="evidence" value="ECO:0007669"/>
    <property type="project" value="UniProtKB-UniPathway"/>
</dbReference>
<dbReference type="GO" id="GO:0051259">
    <property type="term" value="P:protein complex oligomerization"/>
    <property type="evidence" value="ECO:0007669"/>
    <property type="project" value="InterPro"/>
</dbReference>
<dbReference type="GO" id="GO:1900079">
    <property type="term" value="P:regulation of arginine biosynthetic process"/>
    <property type="evidence" value="ECO:0007669"/>
    <property type="project" value="UniProtKB-UniRule"/>
</dbReference>
<dbReference type="Gene3D" id="3.30.1360.40">
    <property type="match status" value="1"/>
</dbReference>
<dbReference type="Gene3D" id="1.10.10.10">
    <property type="entry name" value="Winged helix-like DNA-binding domain superfamily/Winged helix DNA-binding domain"/>
    <property type="match status" value="1"/>
</dbReference>
<dbReference type="HAMAP" id="MF_00173">
    <property type="entry name" value="Arg_repressor"/>
    <property type="match status" value="1"/>
</dbReference>
<dbReference type="InterPro" id="IPR001669">
    <property type="entry name" value="Arg_repress"/>
</dbReference>
<dbReference type="InterPro" id="IPR020899">
    <property type="entry name" value="Arg_repress_C"/>
</dbReference>
<dbReference type="InterPro" id="IPR036251">
    <property type="entry name" value="Arg_repress_C_sf"/>
</dbReference>
<dbReference type="InterPro" id="IPR020900">
    <property type="entry name" value="Arg_repress_DNA-bd"/>
</dbReference>
<dbReference type="InterPro" id="IPR036388">
    <property type="entry name" value="WH-like_DNA-bd_sf"/>
</dbReference>
<dbReference type="InterPro" id="IPR036390">
    <property type="entry name" value="WH_DNA-bd_sf"/>
</dbReference>
<dbReference type="NCBIfam" id="TIGR01529">
    <property type="entry name" value="argR_whole"/>
    <property type="match status" value="1"/>
</dbReference>
<dbReference type="NCBIfam" id="NF003457">
    <property type="entry name" value="PRK05066.1"/>
    <property type="match status" value="1"/>
</dbReference>
<dbReference type="PANTHER" id="PTHR34471">
    <property type="entry name" value="ARGININE REPRESSOR"/>
    <property type="match status" value="1"/>
</dbReference>
<dbReference type="PANTHER" id="PTHR34471:SF1">
    <property type="entry name" value="ARGININE REPRESSOR"/>
    <property type="match status" value="1"/>
</dbReference>
<dbReference type="Pfam" id="PF01316">
    <property type="entry name" value="Arg_repressor"/>
    <property type="match status" value="1"/>
</dbReference>
<dbReference type="Pfam" id="PF02863">
    <property type="entry name" value="Arg_repressor_C"/>
    <property type="match status" value="1"/>
</dbReference>
<dbReference type="PRINTS" id="PR01467">
    <property type="entry name" value="ARGREPRESSOR"/>
</dbReference>
<dbReference type="SUPFAM" id="SSF55252">
    <property type="entry name" value="C-terminal domain of arginine repressor"/>
    <property type="match status" value="1"/>
</dbReference>
<dbReference type="SUPFAM" id="SSF46785">
    <property type="entry name" value="Winged helix' DNA-binding domain"/>
    <property type="match status" value="1"/>
</dbReference>
<gene>
    <name evidence="1" type="primary">argR</name>
    <name type="ordered locus">PBPRA0390</name>
</gene>
<keyword id="KW-0028">Amino-acid biosynthesis</keyword>
<keyword id="KW-0055">Arginine biosynthesis</keyword>
<keyword id="KW-0963">Cytoplasm</keyword>
<keyword id="KW-0238">DNA-binding</keyword>
<keyword id="KW-1185">Reference proteome</keyword>
<keyword id="KW-0678">Repressor</keyword>
<keyword id="KW-0804">Transcription</keyword>
<keyword id="KW-0805">Transcription regulation</keyword>
<protein>
    <recommendedName>
        <fullName evidence="1">Arginine repressor</fullName>
    </recommendedName>
</protein>
<accession>Q6LV53</accession>